<comment type="function">
    <text evidence="1">Binds directly to 23S rRNA. The L1 stalk is quite mobile in the ribosome, and is involved in E site tRNA release.</text>
</comment>
<comment type="function">
    <text evidence="1">Protein L1 is also a translational repressor protein, it controls the translation of the L11 operon by binding to its mRNA.</text>
</comment>
<comment type="subunit">
    <text evidence="1">Part of the 50S ribosomal subunit.</text>
</comment>
<comment type="similarity">
    <text evidence="1">Belongs to the universal ribosomal protein uL1 family.</text>
</comment>
<evidence type="ECO:0000255" key="1">
    <source>
        <dbReference type="HAMAP-Rule" id="MF_01318"/>
    </source>
</evidence>
<evidence type="ECO:0000305" key="2"/>
<name>RL1_SULNB</name>
<accession>A6Q6H9</accession>
<gene>
    <name evidence="1" type="primary">rplA</name>
    <name type="ordered locus">SUN_0128</name>
</gene>
<dbReference type="EMBL" id="AP009179">
    <property type="protein sequence ID" value="BAF71088.1"/>
    <property type="molecule type" value="Genomic_DNA"/>
</dbReference>
<dbReference type="RefSeq" id="WP_011979821.1">
    <property type="nucleotide sequence ID" value="NC_009663.1"/>
</dbReference>
<dbReference type="SMR" id="A6Q6H9"/>
<dbReference type="STRING" id="387093.SUN_0128"/>
<dbReference type="KEGG" id="sun:SUN_0128"/>
<dbReference type="eggNOG" id="COG0081">
    <property type="taxonomic scope" value="Bacteria"/>
</dbReference>
<dbReference type="HOGENOM" id="CLU_062853_0_0_7"/>
<dbReference type="OrthoDB" id="9803740at2"/>
<dbReference type="Proteomes" id="UP000006378">
    <property type="component" value="Chromosome"/>
</dbReference>
<dbReference type="GO" id="GO:0022625">
    <property type="term" value="C:cytosolic large ribosomal subunit"/>
    <property type="evidence" value="ECO:0007669"/>
    <property type="project" value="TreeGrafter"/>
</dbReference>
<dbReference type="GO" id="GO:0019843">
    <property type="term" value="F:rRNA binding"/>
    <property type="evidence" value="ECO:0007669"/>
    <property type="project" value="UniProtKB-UniRule"/>
</dbReference>
<dbReference type="GO" id="GO:0003735">
    <property type="term" value="F:structural constituent of ribosome"/>
    <property type="evidence" value="ECO:0007669"/>
    <property type="project" value="InterPro"/>
</dbReference>
<dbReference type="GO" id="GO:0000049">
    <property type="term" value="F:tRNA binding"/>
    <property type="evidence" value="ECO:0007669"/>
    <property type="project" value="UniProtKB-KW"/>
</dbReference>
<dbReference type="GO" id="GO:0006417">
    <property type="term" value="P:regulation of translation"/>
    <property type="evidence" value="ECO:0007669"/>
    <property type="project" value="UniProtKB-KW"/>
</dbReference>
<dbReference type="GO" id="GO:0006412">
    <property type="term" value="P:translation"/>
    <property type="evidence" value="ECO:0007669"/>
    <property type="project" value="UniProtKB-UniRule"/>
</dbReference>
<dbReference type="CDD" id="cd00403">
    <property type="entry name" value="Ribosomal_L1"/>
    <property type="match status" value="1"/>
</dbReference>
<dbReference type="FunFam" id="3.40.50.790:FF:000001">
    <property type="entry name" value="50S ribosomal protein L1"/>
    <property type="match status" value="1"/>
</dbReference>
<dbReference type="Gene3D" id="3.30.190.20">
    <property type="match status" value="1"/>
</dbReference>
<dbReference type="Gene3D" id="3.40.50.790">
    <property type="match status" value="1"/>
</dbReference>
<dbReference type="HAMAP" id="MF_01318_B">
    <property type="entry name" value="Ribosomal_uL1_B"/>
    <property type="match status" value="1"/>
</dbReference>
<dbReference type="InterPro" id="IPR005878">
    <property type="entry name" value="Ribosom_uL1_bac-type"/>
</dbReference>
<dbReference type="InterPro" id="IPR002143">
    <property type="entry name" value="Ribosomal_uL1"/>
</dbReference>
<dbReference type="InterPro" id="IPR023674">
    <property type="entry name" value="Ribosomal_uL1-like"/>
</dbReference>
<dbReference type="InterPro" id="IPR028364">
    <property type="entry name" value="Ribosomal_uL1/biogenesis"/>
</dbReference>
<dbReference type="InterPro" id="IPR016095">
    <property type="entry name" value="Ribosomal_uL1_3-a/b-sand"/>
</dbReference>
<dbReference type="InterPro" id="IPR023673">
    <property type="entry name" value="Ribosomal_uL1_CS"/>
</dbReference>
<dbReference type="NCBIfam" id="TIGR01169">
    <property type="entry name" value="rplA_bact"/>
    <property type="match status" value="1"/>
</dbReference>
<dbReference type="PANTHER" id="PTHR36427">
    <property type="entry name" value="54S RIBOSOMAL PROTEIN L1, MITOCHONDRIAL"/>
    <property type="match status" value="1"/>
</dbReference>
<dbReference type="PANTHER" id="PTHR36427:SF3">
    <property type="entry name" value="LARGE RIBOSOMAL SUBUNIT PROTEIN UL1M"/>
    <property type="match status" value="1"/>
</dbReference>
<dbReference type="Pfam" id="PF00687">
    <property type="entry name" value="Ribosomal_L1"/>
    <property type="match status" value="1"/>
</dbReference>
<dbReference type="PIRSF" id="PIRSF002155">
    <property type="entry name" value="Ribosomal_L1"/>
    <property type="match status" value="1"/>
</dbReference>
<dbReference type="SUPFAM" id="SSF56808">
    <property type="entry name" value="Ribosomal protein L1"/>
    <property type="match status" value="1"/>
</dbReference>
<dbReference type="PROSITE" id="PS01199">
    <property type="entry name" value="RIBOSOMAL_L1"/>
    <property type="match status" value="1"/>
</dbReference>
<sequence>MAKKLSKRREALLKKVDATKEYSVDEAMATLKELKSAKFDETVEVALNLNVDPRHADQMVRGSVVLPHGTGKTVRVAVFAKDAKADEAKAAGADLVGAADLIEDIQAGKIDFDIVISTPDMMGVLGKVARVLGPKGLMPNPKTGTVTMDVAKAVENAKGGQVNFRVDKKGNIHAGIGKISFDADKIKENFVTLLEKINRAKPASAKGRYITNAAVSLTMSPSITLDTSEVMEIK</sequence>
<protein>
    <recommendedName>
        <fullName evidence="1">Large ribosomal subunit protein uL1</fullName>
    </recommendedName>
    <alternativeName>
        <fullName evidence="2">50S ribosomal protein L1</fullName>
    </alternativeName>
</protein>
<feature type="chain" id="PRO_0000308123" description="Large ribosomal subunit protein uL1">
    <location>
        <begin position="1"/>
        <end position="234"/>
    </location>
</feature>
<organism>
    <name type="scientific">Sulfurovum sp. (strain NBC37-1)</name>
    <dbReference type="NCBI Taxonomy" id="387093"/>
    <lineage>
        <taxon>Bacteria</taxon>
        <taxon>Pseudomonadati</taxon>
        <taxon>Campylobacterota</taxon>
        <taxon>Epsilonproteobacteria</taxon>
        <taxon>Campylobacterales</taxon>
        <taxon>Sulfurovaceae</taxon>
        <taxon>Sulfurovum</taxon>
    </lineage>
</organism>
<keyword id="KW-0678">Repressor</keyword>
<keyword id="KW-0687">Ribonucleoprotein</keyword>
<keyword id="KW-0689">Ribosomal protein</keyword>
<keyword id="KW-0694">RNA-binding</keyword>
<keyword id="KW-0699">rRNA-binding</keyword>
<keyword id="KW-0810">Translation regulation</keyword>
<keyword id="KW-0820">tRNA-binding</keyword>
<proteinExistence type="inferred from homology"/>
<reference key="1">
    <citation type="journal article" date="2007" name="Proc. Natl. Acad. Sci. U.S.A.">
        <title>Deep-sea vent epsilon-proteobacterial genomes provide insights into emergence of pathogens.</title>
        <authorList>
            <person name="Nakagawa S."/>
            <person name="Takaki Y."/>
            <person name="Shimamura S."/>
            <person name="Reysenbach A.-L."/>
            <person name="Takai K."/>
            <person name="Horikoshi K."/>
        </authorList>
    </citation>
    <scope>NUCLEOTIDE SEQUENCE [LARGE SCALE GENOMIC DNA]</scope>
    <source>
        <strain>NBC37-1</strain>
    </source>
</reference>